<dbReference type="EC" id="5.3.99.3" evidence="1"/>
<dbReference type="EC" id="1.11.1.-" evidence="1"/>
<dbReference type="EC" id="2.5.1.18" evidence="1"/>
<dbReference type="EMBL" id="AY032727">
    <property type="protein sequence ID" value="AAK51127.1"/>
    <property type="molecule type" value="mRNA"/>
</dbReference>
<dbReference type="EMBL" id="BC120228">
    <property type="protein sequence ID" value="AAI20229.1"/>
    <property type="molecule type" value="mRNA"/>
</dbReference>
<dbReference type="RefSeq" id="NP_776868.1">
    <property type="nucleotide sequence ID" value="NM_174443.2"/>
</dbReference>
<dbReference type="SMR" id="Q95L14"/>
<dbReference type="FunCoup" id="Q95L14">
    <property type="interactions" value="22"/>
</dbReference>
<dbReference type="STRING" id="9913.ENSBTAP00000025912"/>
<dbReference type="ChEMBL" id="CHEMBL2502"/>
<dbReference type="PaxDb" id="9913-ENSBTAP00000025912"/>
<dbReference type="Ensembl" id="ENSBTAT00000025912.6">
    <property type="protein sequence ID" value="ENSBTAP00000025912.4"/>
    <property type="gene ID" value="ENSBTAG00000019453.6"/>
</dbReference>
<dbReference type="GeneID" id="282019"/>
<dbReference type="KEGG" id="bta:282019"/>
<dbReference type="CTD" id="9536"/>
<dbReference type="VEuPathDB" id="HostDB:ENSBTAG00000019453"/>
<dbReference type="VGNC" id="VGNC:33505">
    <property type="gene designation" value="PTGES"/>
</dbReference>
<dbReference type="eggNOG" id="ENOG502RZBK">
    <property type="taxonomic scope" value="Eukaryota"/>
</dbReference>
<dbReference type="GeneTree" id="ENSGT00390000011980"/>
<dbReference type="HOGENOM" id="CLU_105467_1_1_1"/>
<dbReference type="InParanoid" id="Q95L14"/>
<dbReference type="OMA" id="TIAQIPC"/>
<dbReference type="OrthoDB" id="193139at2759"/>
<dbReference type="TreeFam" id="TF105327"/>
<dbReference type="BRENDA" id="5.3.99.3">
    <property type="organism ID" value="908"/>
</dbReference>
<dbReference type="Reactome" id="R-BTA-2162123">
    <property type="pathway name" value="Synthesis of Prostaglandins (PG) and Thromboxanes (TX)"/>
</dbReference>
<dbReference type="UniPathway" id="UPA00662"/>
<dbReference type="Proteomes" id="UP000009136">
    <property type="component" value="Chromosome 11"/>
</dbReference>
<dbReference type="Bgee" id="ENSBTAG00000019453">
    <property type="expression patterns" value="Expressed in placenta and 92 other cell types or tissues"/>
</dbReference>
<dbReference type="GO" id="GO:0016020">
    <property type="term" value="C:membrane"/>
    <property type="evidence" value="ECO:0000250"/>
    <property type="project" value="UniProtKB"/>
</dbReference>
<dbReference type="GO" id="GO:0048471">
    <property type="term" value="C:perinuclear region of cytoplasm"/>
    <property type="evidence" value="ECO:0007669"/>
    <property type="project" value="UniProtKB-SubCell"/>
</dbReference>
<dbReference type="GO" id="GO:0043295">
    <property type="term" value="F:glutathione binding"/>
    <property type="evidence" value="ECO:0000250"/>
    <property type="project" value="UniProtKB"/>
</dbReference>
<dbReference type="GO" id="GO:0004602">
    <property type="term" value="F:glutathione peroxidase activity"/>
    <property type="evidence" value="ECO:0000250"/>
    <property type="project" value="UniProtKB"/>
</dbReference>
<dbReference type="GO" id="GO:0004364">
    <property type="term" value="F:glutathione transferase activity"/>
    <property type="evidence" value="ECO:0000250"/>
    <property type="project" value="UniProtKB"/>
</dbReference>
<dbReference type="GO" id="GO:0050220">
    <property type="term" value="F:prostaglandin-E synthase activity"/>
    <property type="evidence" value="ECO:0000250"/>
    <property type="project" value="UniProtKB"/>
</dbReference>
<dbReference type="GO" id="GO:0071347">
    <property type="term" value="P:cellular response to interleukin-1"/>
    <property type="evidence" value="ECO:0000315"/>
    <property type="project" value="AgBase"/>
</dbReference>
<dbReference type="GO" id="GO:0001516">
    <property type="term" value="P:prostaglandin biosynthetic process"/>
    <property type="evidence" value="ECO:0000250"/>
    <property type="project" value="UniProtKB"/>
</dbReference>
<dbReference type="GO" id="GO:0050727">
    <property type="term" value="P:regulation of inflammatory response"/>
    <property type="evidence" value="ECO:0000250"/>
    <property type="project" value="UniProtKB"/>
</dbReference>
<dbReference type="FunFam" id="1.20.120.550:FF:000002">
    <property type="entry name" value="Microsomal glutathione S-transferase 1"/>
    <property type="match status" value="1"/>
</dbReference>
<dbReference type="Gene3D" id="1.20.120.550">
    <property type="entry name" value="Membrane associated eicosanoid/glutathione metabolism-like domain"/>
    <property type="match status" value="1"/>
</dbReference>
<dbReference type="InterPro" id="IPR023352">
    <property type="entry name" value="MAPEG-like_dom_sf"/>
</dbReference>
<dbReference type="InterPro" id="IPR001129">
    <property type="entry name" value="Membr-assoc_MAPEG"/>
</dbReference>
<dbReference type="InterPro" id="IPR040162">
    <property type="entry name" value="MGST1-like"/>
</dbReference>
<dbReference type="PANTHER" id="PTHR10689">
    <property type="entry name" value="MICROSOMAL GLUTATHIONE S-TRANSFERASE 1"/>
    <property type="match status" value="1"/>
</dbReference>
<dbReference type="PANTHER" id="PTHR10689:SF9">
    <property type="entry name" value="PROSTAGLANDIN E SYNTHASE"/>
    <property type="match status" value="1"/>
</dbReference>
<dbReference type="Pfam" id="PF01124">
    <property type="entry name" value="MAPEG"/>
    <property type="match status" value="1"/>
</dbReference>
<dbReference type="SUPFAM" id="SSF161084">
    <property type="entry name" value="MAPEG domain-like"/>
    <property type="match status" value="1"/>
</dbReference>
<reference key="1">
    <citation type="journal article" date="2001" name="J. Biol. Chem.">
        <title>Molecular cloning and induction of bovine prostaglandin E synthase by gonadotropins in ovarian follicles prior to ovulation in vivo.</title>
        <authorList>
            <person name="Filion F."/>
            <person name="Bouchard N."/>
            <person name="Goff A.K."/>
            <person name="Lussier J.G."/>
            <person name="Sirois J."/>
        </authorList>
    </citation>
    <scope>NUCLEOTIDE SEQUENCE [MRNA]</scope>
</reference>
<reference key="2">
    <citation type="submission" date="2006-08" db="EMBL/GenBank/DDBJ databases">
        <authorList>
            <consortium name="NIH - Mammalian Gene Collection (MGC) project"/>
        </authorList>
    </citation>
    <scope>NUCLEOTIDE SEQUENCE [LARGE SCALE MRNA]</scope>
    <source>
        <strain>Hereford</strain>
        <tissue>Fetal medulla</tissue>
    </source>
</reference>
<evidence type="ECO:0000250" key="1">
    <source>
        <dbReference type="UniProtKB" id="O14684"/>
    </source>
</evidence>
<evidence type="ECO:0000250" key="2">
    <source>
        <dbReference type="UniProtKB" id="Q9JM51"/>
    </source>
</evidence>
<evidence type="ECO:0000305" key="3"/>
<feature type="chain" id="PRO_0000217743" description="Prostaglandin E synthase">
    <location>
        <begin position="1"/>
        <end position="153"/>
    </location>
</feature>
<feature type="topological domain" description="Lumenal" evidence="1">
    <location>
        <begin position="1"/>
        <end position="13"/>
    </location>
</feature>
<feature type="transmembrane region" description="Helical" evidence="1">
    <location>
        <begin position="14"/>
        <end position="42"/>
    </location>
</feature>
<feature type="topological domain" description="Cytoplasmic" evidence="1">
    <location>
        <begin position="43"/>
        <end position="61"/>
    </location>
</feature>
<feature type="transmembrane region" description="Helical" evidence="1">
    <location>
        <begin position="62"/>
        <end position="91"/>
    </location>
</feature>
<feature type="topological domain" description="Lumenal" evidence="1">
    <location>
        <begin position="92"/>
        <end position="96"/>
    </location>
</feature>
<feature type="transmembrane region" description="Helical" evidence="1">
    <location>
        <begin position="97"/>
        <end position="120"/>
    </location>
</feature>
<feature type="topological domain" description="Cytoplasmic" evidence="1">
    <location>
        <begin position="121"/>
        <end position="124"/>
    </location>
</feature>
<feature type="transmembrane region" description="Helical" evidence="1">
    <location>
        <begin position="125"/>
        <end position="153"/>
    </location>
</feature>
<feature type="binding site" evidence="1">
    <location>
        <position position="39"/>
    </location>
    <ligand>
        <name>glutathione</name>
        <dbReference type="ChEBI" id="CHEBI:57925"/>
    </ligand>
</feature>
<feature type="binding site" evidence="1">
    <location>
        <begin position="74"/>
        <end position="78"/>
    </location>
    <ligand>
        <name>glutathione</name>
        <dbReference type="ChEBI" id="CHEBI:57925"/>
    </ligand>
</feature>
<feature type="binding site" evidence="1">
    <location>
        <position position="114"/>
    </location>
    <ligand>
        <name>glutathione</name>
        <dbReference type="ChEBI" id="CHEBI:57925"/>
    </ligand>
</feature>
<feature type="binding site" evidence="1">
    <location>
        <position position="118"/>
    </location>
    <ligand>
        <name>glutathione</name>
        <dbReference type="ChEBI" id="CHEBI:57925"/>
    </ligand>
</feature>
<feature type="binding site" evidence="1">
    <location>
        <begin position="127"/>
        <end position="131"/>
    </location>
    <ligand>
        <name>glutathione</name>
        <dbReference type="ChEBI" id="CHEBI:57925"/>
    </ligand>
</feature>
<feature type="site" description="Essential for protaglandin-E synthase activity" evidence="1">
    <location>
        <position position="50"/>
    </location>
</feature>
<feature type="site" description="Essential for protaglandin-E synthase activity" evidence="1">
    <location>
        <position position="127"/>
    </location>
</feature>
<feature type="sequence conflict" description="In Ref. 2; AAI20229." evidence="3" ref="2">
    <original>S</original>
    <variation>G</variation>
    <location>
        <position position="21"/>
    </location>
</feature>
<name>PTGES_BOVIN</name>
<accession>Q95L14</accession>
<accession>Q0P5C8</accession>
<comment type="function">
    <text evidence="1 2">Terminal enzyme of the cyclooxygenase (COX)-2-mediated prostaglandin E2 (PGE2) biosynthetic pathway. Catalyzes the glutathione-dependent oxidoreduction of prostaglandin endoperoxide H2 (PGH2) to prostaglandin E2 (PGE2) in response to inflammatory stimuli (By similarity). Plays a key role in inflammation response, fever and pain (By similarity). Also catalyzes the oxidoreduction of endocannabinoids into prostaglandin glycerol esters and PGG2 into 15-hydroperoxy-PGE2. In addition, displays low glutathione transferase and glutathione-dependent peroxidase activities, toward 1-chloro-2,4-dinitrobenzene and 5-hydroperoxyicosatetraenoic acid (5-HPETE), respectively (By similarity).</text>
</comment>
<comment type="catalytic activity">
    <reaction evidence="1">
        <text>prostaglandin H2 = prostaglandin E2</text>
        <dbReference type="Rhea" id="RHEA:12893"/>
        <dbReference type="ChEBI" id="CHEBI:57405"/>
        <dbReference type="ChEBI" id="CHEBI:606564"/>
        <dbReference type="EC" id="5.3.99.3"/>
    </reaction>
    <physiologicalReaction direction="left-to-right" evidence="1">
        <dbReference type="Rhea" id="RHEA:12894"/>
    </physiologicalReaction>
</comment>
<comment type="catalytic activity">
    <reaction evidence="1">
        <text>2-glyceryl-prostaglandin H2 = 2-glyceryl-prostaglandin E2</text>
        <dbReference type="Rhea" id="RHEA:53324"/>
        <dbReference type="ChEBI" id="CHEBI:85166"/>
        <dbReference type="ChEBI" id="CHEBI:137172"/>
    </reaction>
    <physiologicalReaction direction="left-to-right" evidence="1">
        <dbReference type="Rhea" id="RHEA:53325"/>
    </physiologicalReaction>
</comment>
<comment type="catalytic activity">
    <reaction evidence="1">
        <text>prostaglandin G2 = (15S)-15-hydroperoxy-prostaglandin E2</text>
        <dbReference type="Rhea" id="RHEA:64364"/>
        <dbReference type="ChEBI" id="CHEBI:82629"/>
        <dbReference type="ChEBI" id="CHEBI:152564"/>
    </reaction>
    <physiologicalReaction direction="left-to-right" evidence="1">
        <dbReference type="Rhea" id="RHEA:64365"/>
    </physiologicalReaction>
</comment>
<comment type="catalytic activity">
    <reaction evidence="1">
        <text>1-chloro-2,4-dinitrobenzene + glutathione = 2,4-dinitrophenyl-S-glutathione + chloride + H(+)</text>
        <dbReference type="Rhea" id="RHEA:51220"/>
        <dbReference type="ChEBI" id="CHEBI:15378"/>
        <dbReference type="ChEBI" id="CHEBI:17996"/>
        <dbReference type="ChEBI" id="CHEBI:34718"/>
        <dbReference type="ChEBI" id="CHEBI:57925"/>
        <dbReference type="ChEBI" id="CHEBI:133977"/>
        <dbReference type="EC" id="2.5.1.18"/>
    </reaction>
</comment>
<comment type="catalytic activity">
    <reaction evidence="1">
        <text>(5S)-hydroperoxy-(6E,8Z,11Z,14Z)-eicosatetraenoate + 2 glutathione = (5S)-hydroxy-(6E,8Z,11Z,14Z)-eicosatetraenoate + glutathione disulfide + H2O</text>
        <dbReference type="Rhea" id="RHEA:48620"/>
        <dbReference type="ChEBI" id="CHEBI:15377"/>
        <dbReference type="ChEBI" id="CHEBI:57450"/>
        <dbReference type="ChEBI" id="CHEBI:57925"/>
        <dbReference type="ChEBI" id="CHEBI:58297"/>
        <dbReference type="ChEBI" id="CHEBI:90632"/>
    </reaction>
</comment>
<comment type="cofactor">
    <cofactor evidence="1">
        <name>glutathione</name>
        <dbReference type="ChEBI" id="CHEBI:57925"/>
    </cofactor>
</comment>
<comment type="pathway">
    <text evidence="1">Lipid metabolism; prostaglandin biosynthesis.</text>
</comment>
<comment type="subunit">
    <text evidence="1">Homotrimer.</text>
</comment>
<comment type="subcellular location">
    <subcellularLocation>
        <location evidence="1">Membrane</location>
        <topology evidence="1">Multi-pass membrane protein</topology>
    </subcellularLocation>
    <subcellularLocation>
        <location evidence="1">Cytoplasm</location>
        <location evidence="1">Perinuclear region</location>
    </subcellularLocation>
    <text evidence="1">Colocalizes with PTGS1/COX-1 and PTGS2/COX-2 in the perinuclear compartment.</text>
</comment>
<comment type="similarity">
    <text evidence="3">Belongs to the MAPEG family.</text>
</comment>
<proteinExistence type="evidence at transcript level"/>
<protein>
    <recommendedName>
        <fullName>Prostaglandin E synthase</fullName>
        <ecNumber evidence="1">5.3.99.3</ecNumber>
    </recommendedName>
    <alternativeName>
        <fullName>Glutathione peroxidase PTGES</fullName>
        <ecNumber evidence="1">1.11.1.-</ecNumber>
    </alternativeName>
    <alternativeName>
        <fullName>Glutathione transferase PTGES</fullName>
        <ecNumber evidence="1">2.5.1.18</ecNumber>
    </alternativeName>
    <alternativeName>
        <fullName>Microsomal prostaglandin E synthase 1</fullName>
        <shortName>MPGES-1</shortName>
    </alternativeName>
</protein>
<keyword id="KW-0963">Cytoplasm</keyword>
<keyword id="KW-0275">Fatty acid biosynthesis</keyword>
<keyword id="KW-0276">Fatty acid metabolism</keyword>
<keyword id="KW-0413">Isomerase</keyword>
<keyword id="KW-0444">Lipid biosynthesis</keyword>
<keyword id="KW-0443">Lipid metabolism</keyword>
<keyword id="KW-0472">Membrane</keyword>
<keyword id="KW-0560">Oxidoreductase</keyword>
<keyword id="KW-0643">Prostaglandin biosynthesis</keyword>
<keyword id="KW-0644">Prostaglandin metabolism</keyword>
<keyword id="KW-1185">Reference proteome</keyword>
<keyword id="KW-0808">Transferase</keyword>
<keyword id="KW-0812">Transmembrane</keyword>
<keyword id="KW-1133">Transmembrane helix</keyword>
<organism>
    <name type="scientific">Bos taurus</name>
    <name type="common">Bovine</name>
    <dbReference type="NCBI Taxonomy" id="9913"/>
    <lineage>
        <taxon>Eukaryota</taxon>
        <taxon>Metazoa</taxon>
        <taxon>Chordata</taxon>
        <taxon>Craniata</taxon>
        <taxon>Vertebrata</taxon>
        <taxon>Euteleostomi</taxon>
        <taxon>Mammalia</taxon>
        <taxon>Eutheria</taxon>
        <taxon>Laurasiatheria</taxon>
        <taxon>Artiodactyla</taxon>
        <taxon>Ruminantia</taxon>
        <taxon>Pecora</taxon>
        <taxon>Bovidae</taxon>
        <taxon>Bovinae</taxon>
        <taxon>Bos</taxon>
    </lineage>
</organism>
<sequence length="153" mass="17298">MPPSGLELMNGQVLPAFLLCSALLVIKMYVVAVITGQVRLRKKAFANPEDAQRHGGLQYCRNDPDVERCLRAHRNDMETIYPFLFLGFVYSFLGPNPFVARMHFLVFFLGRMVHTVAYLGKLRAPTRSLAYTLAQLPCASMALQIVWEAARHL</sequence>
<gene>
    <name type="primary">PTGES</name>
</gene>